<sequence>MQPIRYRTDLTPYNTFGLRAQARAFIALEHADGLRDIVRLPEFDRDTVLWLGGGSNILLMQDYAGLVVHMENKGIREIARSDGMVLIEAQAGEIWHDFVLHTVALGLSGLENLSLIPGTVGASPVQNIGAYGVEAKDVIHSVRCFDLDTETFVTLSNADCRFAYRESLFKQEGKGRYVIVSVVFALKTHFVPNLGYGDLAAKVAELSAGREATAKDVSDAVCAIRNSKLPNPNVLGNVGSFFKNPVIGAEKAAALLEQHPDMPHYPQPDGSVKLAAGWLIDQCRLKGFQIGGAAVHGRQALVLVNKNNASANDVRQLAQHIKFTVFARFQVELHAEPNWLPASFSL</sequence>
<reference key="1">
    <citation type="journal article" date="2008" name="Genomics">
        <title>Characterization of ST-4821 complex, a unique Neisseria meningitidis clone.</title>
        <authorList>
            <person name="Peng J."/>
            <person name="Yang L."/>
            <person name="Yang F."/>
            <person name="Yang J."/>
            <person name="Yan Y."/>
            <person name="Nie H."/>
            <person name="Zhang X."/>
            <person name="Xiong Z."/>
            <person name="Jiang Y."/>
            <person name="Cheng F."/>
            <person name="Xu X."/>
            <person name="Chen S."/>
            <person name="Sun L."/>
            <person name="Li W."/>
            <person name="Shen Y."/>
            <person name="Shao Z."/>
            <person name="Liang X."/>
            <person name="Xu J."/>
            <person name="Jin Q."/>
        </authorList>
    </citation>
    <scope>NUCLEOTIDE SEQUENCE [LARGE SCALE GENOMIC DNA]</scope>
    <source>
        <strain>053442</strain>
    </source>
</reference>
<protein>
    <recommendedName>
        <fullName evidence="1">UDP-N-acetylenolpyruvoylglucosamine reductase</fullName>
        <ecNumber evidence="1">1.3.1.98</ecNumber>
    </recommendedName>
    <alternativeName>
        <fullName evidence="1">UDP-N-acetylmuramate dehydrogenase</fullName>
    </alternativeName>
</protein>
<accession>A9M3P3</accession>
<organism>
    <name type="scientific">Neisseria meningitidis serogroup C (strain 053442)</name>
    <dbReference type="NCBI Taxonomy" id="374833"/>
    <lineage>
        <taxon>Bacteria</taxon>
        <taxon>Pseudomonadati</taxon>
        <taxon>Pseudomonadota</taxon>
        <taxon>Betaproteobacteria</taxon>
        <taxon>Neisseriales</taxon>
        <taxon>Neisseriaceae</taxon>
        <taxon>Neisseria</taxon>
    </lineage>
</organism>
<evidence type="ECO:0000255" key="1">
    <source>
        <dbReference type="HAMAP-Rule" id="MF_00037"/>
    </source>
</evidence>
<evidence type="ECO:0000305" key="2"/>
<feature type="chain" id="PRO_0000332479" description="UDP-N-acetylenolpyruvoylglucosamine reductase">
    <location>
        <begin position="1"/>
        <end position="346"/>
    </location>
</feature>
<feature type="domain" description="FAD-binding PCMH-type" evidence="1">
    <location>
        <begin position="18"/>
        <end position="189"/>
    </location>
</feature>
<feature type="active site" evidence="1">
    <location>
        <position position="165"/>
    </location>
</feature>
<feature type="active site" description="Proton donor" evidence="1">
    <location>
        <position position="240"/>
    </location>
</feature>
<feature type="active site" evidence="1">
    <location>
        <position position="336"/>
    </location>
</feature>
<gene>
    <name evidence="1" type="primary">murB</name>
    <name type="ordered locus">NMCC_0775</name>
</gene>
<dbReference type="EC" id="1.3.1.98" evidence="1"/>
<dbReference type="EMBL" id="CP000381">
    <property type="protein sequence ID" value="ABX72968.1"/>
    <property type="status" value="ALT_INIT"/>
    <property type="molecule type" value="Genomic_DNA"/>
</dbReference>
<dbReference type="RefSeq" id="WP_017629051.1">
    <property type="nucleotide sequence ID" value="NC_010120.1"/>
</dbReference>
<dbReference type="SMR" id="A9M3P3"/>
<dbReference type="KEGG" id="nmn:NMCC_0775"/>
<dbReference type="HOGENOM" id="CLU_035304_0_0_4"/>
<dbReference type="UniPathway" id="UPA00219"/>
<dbReference type="Proteomes" id="UP000001177">
    <property type="component" value="Chromosome"/>
</dbReference>
<dbReference type="GO" id="GO:0005829">
    <property type="term" value="C:cytosol"/>
    <property type="evidence" value="ECO:0007669"/>
    <property type="project" value="TreeGrafter"/>
</dbReference>
<dbReference type="GO" id="GO:0071949">
    <property type="term" value="F:FAD binding"/>
    <property type="evidence" value="ECO:0007669"/>
    <property type="project" value="InterPro"/>
</dbReference>
<dbReference type="GO" id="GO:0008762">
    <property type="term" value="F:UDP-N-acetylmuramate dehydrogenase activity"/>
    <property type="evidence" value="ECO:0007669"/>
    <property type="project" value="UniProtKB-UniRule"/>
</dbReference>
<dbReference type="GO" id="GO:0051301">
    <property type="term" value="P:cell division"/>
    <property type="evidence" value="ECO:0007669"/>
    <property type="project" value="UniProtKB-KW"/>
</dbReference>
<dbReference type="GO" id="GO:0071555">
    <property type="term" value="P:cell wall organization"/>
    <property type="evidence" value="ECO:0007669"/>
    <property type="project" value="UniProtKB-KW"/>
</dbReference>
<dbReference type="GO" id="GO:0009252">
    <property type="term" value="P:peptidoglycan biosynthetic process"/>
    <property type="evidence" value="ECO:0007669"/>
    <property type="project" value="UniProtKB-UniRule"/>
</dbReference>
<dbReference type="GO" id="GO:0008360">
    <property type="term" value="P:regulation of cell shape"/>
    <property type="evidence" value="ECO:0007669"/>
    <property type="project" value="UniProtKB-KW"/>
</dbReference>
<dbReference type="Gene3D" id="3.30.465.10">
    <property type="match status" value="1"/>
</dbReference>
<dbReference type="Gene3D" id="3.90.78.10">
    <property type="entry name" value="UDP-N-acetylenolpyruvoylglucosamine reductase, C-terminal domain"/>
    <property type="match status" value="1"/>
</dbReference>
<dbReference type="Gene3D" id="3.30.43.10">
    <property type="entry name" value="Uridine Diphospho-n-acetylenolpyruvylglucosamine Reductase, domain 2"/>
    <property type="match status" value="1"/>
</dbReference>
<dbReference type="HAMAP" id="MF_00037">
    <property type="entry name" value="MurB"/>
    <property type="match status" value="1"/>
</dbReference>
<dbReference type="InterPro" id="IPR016166">
    <property type="entry name" value="FAD-bd_PCMH"/>
</dbReference>
<dbReference type="InterPro" id="IPR036318">
    <property type="entry name" value="FAD-bd_PCMH-like_sf"/>
</dbReference>
<dbReference type="InterPro" id="IPR016167">
    <property type="entry name" value="FAD-bd_PCMH_sub1"/>
</dbReference>
<dbReference type="InterPro" id="IPR016169">
    <property type="entry name" value="FAD-bd_PCMH_sub2"/>
</dbReference>
<dbReference type="InterPro" id="IPR003170">
    <property type="entry name" value="MurB"/>
</dbReference>
<dbReference type="InterPro" id="IPR011601">
    <property type="entry name" value="MurB_C"/>
</dbReference>
<dbReference type="InterPro" id="IPR036635">
    <property type="entry name" value="MurB_C_sf"/>
</dbReference>
<dbReference type="InterPro" id="IPR006094">
    <property type="entry name" value="Oxid_FAD_bind_N"/>
</dbReference>
<dbReference type="NCBIfam" id="TIGR00179">
    <property type="entry name" value="murB"/>
    <property type="match status" value="1"/>
</dbReference>
<dbReference type="NCBIfam" id="NF000755">
    <property type="entry name" value="PRK00046.1"/>
    <property type="match status" value="1"/>
</dbReference>
<dbReference type="NCBIfam" id="NF010478">
    <property type="entry name" value="PRK13903.1"/>
    <property type="match status" value="1"/>
</dbReference>
<dbReference type="PANTHER" id="PTHR21071">
    <property type="entry name" value="UDP-N-ACETYLENOLPYRUVOYLGLUCOSAMINE REDUCTASE"/>
    <property type="match status" value="1"/>
</dbReference>
<dbReference type="PANTHER" id="PTHR21071:SF4">
    <property type="entry name" value="UDP-N-ACETYLENOLPYRUVOYLGLUCOSAMINE REDUCTASE"/>
    <property type="match status" value="1"/>
</dbReference>
<dbReference type="Pfam" id="PF01565">
    <property type="entry name" value="FAD_binding_4"/>
    <property type="match status" value="1"/>
</dbReference>
<dbReference type="Pfam" id="PF02873">
    <property type="entry name" value="MurB_C"/>
    <property type="match status" value="1"/>
</dbReference>
<dbReference type="SUPFAM" id="SSF56176">
    <property type="entry name" value="FAD-binding/transporter-associated domain-like"/>
    <property type="match status" value="1"/>
</dbReference>
<dbReference type="SUPFAM" id="SSF56194">
    <property type="entry name" value="Uridine diphospho-N-Acetylenolpyruvylglucosamine reductase, MurB, C-terminal domain"/>
    <property type="match status" value="1"/>
</dbReference>
<dbReference type="PROSITE" id="PS51387">
    <property type="entry name" value="FAD_PCMH"/>
    <property type="match status" value="1"/>
</dbReference>
<name>MURB_NEIM0</name>
<keyword id="KW-0131">Cell cycle</keyword>
<keyword id="KW-0132">Cell division</keyword>
<keyword id="KW-0133">Cell shape</keyword>
<keyword id="KW-0961">Cell wall biogenesis/degradation</keyword>
<keyword id="KW-0963">Cytoplasm</keyword>
<keyword id="KW-0274">FAD</keyword>
<keyword id="KW-0285">Flavoprotein</keyword>
<keyword id="KW-0521">NADP</keyword>
<keyword id="KW-0560">Oxidoreductase</keyword>
<keyword id="KW-0573">Peptidoglycan synthesis</keyword>
<comment type="function">
    <text evidence="1">Cell wall formation.</text>
</comment>
<comment type="catalytic activity">
    <reaction evidence="1">
        <text>UDP-N-acetyl-alpha-D-muramate + NADP(+) = UDP-N-acetyl-3-O-(1-carboxyvinyl)-alpha-D-glucosamine + NADPH + H(+)</text>
        <dbReference type="Rhea" id="RHEA:12248"/>
        <dbReference type="ChEBI" id="CHEBI:15378"/>
        <dbReference type="ChEBI" id="CHEBI:57783"/>
        <dbReference type="ChEBI" id="CHEBI:58349"/>
        <dbReference type="ChEBI" id="CHEBI:68483"/>
        <dbReference type="ChEBI" id="CHEBI:70757"/>
        <dbReference type="EC" id="1.3.1.98"/>
    </reaction>
</comment>
<comment type="cofactor">
    <cofactor evidence="1">
        <name>FAD</name>
        <dbReference type="ChEBI" id="CHEBI:57692"/>
    </cofactor>
</comment>
<comment type="pathway">
    <text evidence="1">Cell wall biogenesis; peptidoglycan biosynthesis.</text>
</comment>
<comment type="subcellular location">
    <subcellularLocation>
        <location evidence="1">Cytoplasm</location>
    </subcellularLocation>
</comment>
<comment type="similarity">
    <text evidence="1">Belongs to the MurB family.</text>
</comment>
<comment type="sequence caution" evidence="2">
    <conflict type="erroneous initiation">
        <sequence resource="EMBL-CDS" id="ABX72968"/>
    </conflict>
</comment>
<proteinExistence type="inferred from homology"/>